<protein>
    <recommendedName>
        <fullName>cAMP-dependent protein kinase catalytic subunit gamma</fullName>
        <shortName>PKA C-gamma</shortName>
        <ecNumber>2.7.11.11</ecNumber>
    </recommendedName>
</protein>
<keyword id="KW-0067">ATP-binding</keyword>
<keyword id="KW-0114">cAMP</keyword>
<keyword id="KW-0225">Disease variant</keyword>
<keyword id="KW-0418">Kinase</keyword>
<keyword id="KW-0449">Lipoprotein</keyword>
<keyword id="KW-0519">Myristate</keyword>
<keyword id="KW-0547">Nucleotide-binding</keyword>
<keyword id="KW-0597">Phosphoprotein</keyword>
<keyword id="KW-1267">Proteomics identification</keyword>
<keyword id="KW-1185">Reference proteome</keyword>
<keyword id="KW-0723">Serine/threonine-protein kinase</keyword>
<keyword id="KW-0808">Transferase</keyword>
<gene>
    <name type="primary">PRKACG</name>
</gene>
<name>KAPCG_HUMAN</name>
<reference key="1">
    <citation type="journal article" date="1990" name="Mol. Endocrinol.">
        <title>Molecular cloning of a tissue-specific protein kinase (C gamma) from human testis -- representing a third isoform for the catalytic subunit of cAMP-dependent protein kinase.</title>
        <authorList>
            <person name="Beebe S.J."/>
            <person name="Oyen O."/>
            <person name="Sandberg M."/>
            <person name="Froysa A."/>
            <person name="Hansson V."/>
            <person name="Jahnsen T."/>
        </authorList>
    </citation>
    <scope>NUCLEOTIDE SEQUENCE [MRNA]</scope>
    <scope>VARIANT ASP-268</scope>
    <source>
        <tissue>Testis</tissue>
    </source>
</reference>
<reference key="2">
    <citation type="journal article" date="1998" name="Genomics">
        <title>The gene encoding the C gamma catalytic subunit of cAMP-dependent protein kinase is a transcribed retroposon.</title>
        <authorList>
            <person name="Reinton N."/>
            <person name="Haugen T.B."/>
            <person name="Orstavik S."/>
            <person name="Skalhegg B.S."/>
            <person name="Hansson V."/>
            <person name="Jahnsen T."/>
            <person name="Tasken K."/>
        </authorList>
    </citation>
    <scope>NUCLEOTIDE SEQUENCE [GENOMIC DNA]</scope>
</reference>
<reference key="3">
    <citation type="submission" date="2006-06" db="EMBL/GenBank/DDBJ databases">
        <authorList>
            <consortium name="SeattleSNPs variation discovery resource"/>
        </authorList>
    </citation>
    <scope>NUCLEOTIDE SEQUENCE [GENOMIC DNA]</scope>
    <scope>VARIANT ASP-268</scope>
</reference>
<reference key="4">
    <citation type="journal article" date="2004" name="Nature">
        <title>DNA sequence and analysis of human chromosome 9.</title>
        <authorList>
            <person name="Humphray S.J."/>
            <person name="Oliver K."/>
            <person name="Hunt A.R."/>
            <person name="Plumb R.W."/>
            <person name="Loveland J.E."/>
            <person name="Howe K.L."/>
            <person name="Andrews T.D."/>
            <person name="Searle S."/>
            <person name="Hunt S.E."/>
            <person name="Scott C.E."/>
            <person name="Jones M.C."/>
            <person name="Ainscough R."/>
            <person name="Almeida J.P."/>
            <person name="Ambrose K.D."/>
            <person name="Ashwell R.I.S."/>
            <person name="Babbage A.K."/>
            <person name="Babbage S."/>
            <person name="Bagguley C.L."/>
            <person name="Bailey J."/>
            <person name="Banerjee R."/>
            <person name="Barker D.J."/>
            <person name="Barlow K.F."/>
            <person name="Bates K."/>
            <person name="Beasley H."/>
            <person name="Beasley O."/>
            <person name="Bird C.P."/>
            <person name="Bray-Allen S."/>
            <person name="Brown A.J."/>
            <person name="Brown J.Y."/>
            <person name="Burford D."/>
            <person name="Burrill W."/>
            <person name="Burton J."/>
            <person name="Carder C."/>
            <person name="Carter N.P."/>
            <person name="Chapman J.C."/>
            <person name="Chen Y."/>
            <person name="Clarke G."/>
            <person name="Clark S.Y."/>
            <person name="Clee C.M."/>
            <person name="Clegg S."/>
            <person name="Collier R.E."/>
            <person name="Corby N."/>
            <person name="Crosier M."/>
            <person name="Cummings A.T."/>
            <person name="Davies J."/>
            <person name="Dhami P."/>
            <person name="Dunn M."/>
            <person name="Dutta I."/>
            <person name="Dyer L.W."/>
            <person name="Earthrowl M.E."/>
            <person name="Faulkner L."/>
            <person name="Fleming C.J."/>
            <person name="Frankish A."/>
            <person name="Frankland J.A."/>
            <person name="French L."/>
            <person name="Fricker D.G."/>
            <person name="Garner P."/>
            <person name="Garnett J."/>
            <person name="Ghori J."/>
            <person name="Gilbert J.G.R."/>
            <person name="Glison C."/>
            <person name="Grafham D.V."/>
            <person name="Gribble S."/>
            <person name="Griffiths C."/>
            <person name="Griffiths-Jones S."/>
            <person name="Grocock R."/>
            <person name="Guy J."/>
            <person name="Hall R.E."/>
            <person name="Hammond S."/>
            <person name="Harley J.L."/>
            <person name="Harrison E.S.I."/>
            <person name="Hart E.A."/>
            <person name="Heath P.D."/>
            <person name="Henderson C.D."/>
            <person name="Hopkins B.L."/>
            <person name="Howard P.J."/>
            <person name="Howden P.J."/>
            <person name="Huckle E."/>
            <person name="Johnson C."/>
            <person name="Johnson D."/>
            <person name="Joy A.A."/>
            <person name="Kay M."/>
            <person name="Keenan S."/>
            <person name="Kershaw J.K."/>
            <person name="Kimberley A.M."/>
            <person name="King A."/>
            <person name="Knights A."/>
            <person name="Laird G.K."/>
            <person name="Langford C."/>
            <person name="Lawlor S."/>
            <person name="Leongamornlert D.A."/>
            <person name="Leversha M."/>
            <person name="Lloyd C."/>
            <person name="Lloyd D.M."/>
            <person name="Lovell J."/>
            <person name="Martin S."/>
            <person name="Mashreghi-Mohammadi M."/>
            <person name="Matthews L."/>
            <person name="McLaren S."/>
            <person name="McLay K.E."/>
            <person name="McMurray A."/>
            <person name="Milne S."/>
            <person name="Nickerson T."/>
            <person name="Nisbett J."/>
            <person name="Nordsiek G."/>
            <person name="Pearce A.V."/>
            <person name="Peck A.I."/>
            <person name="Porter K.M."/>
            <person name="Pandian R."/>
            <person name="Pelan S."/>
            <person name="Phillimore B."/>
            <person name="Povey S."/>
            <person name="Ramsey Y."/>
            <person name="Rand V."/>
            <person name="Scharfe M."/>
            <person name="Sehra H.K."/>
            <person name="Shownkeen R."/>
            <person name="Sims S.K."/>
            <person name="Skuce C.D."/>
            <person name="Smith M."/>
            <person name="Steward C.A."/>
            <person name="Swarbreck D."/>
            <person name="Sycamore N."/>
            <person name="Tester J."/>
            <person name="Thorpe A."/>
            <person name="Tracey A."/>
            <person name="Tromans A."/>
            <person name="Thomas D.W."/>
            <person name="Wall M."/>
            <person name="Wallis J.M."/>
            <person name="West A.P."/>
            <person name="Whitehead S.L."/>
            <person name="Willey D.L."/>
            <person name="Williams S.A."/>
            <person name="Wilming L."/>
            <person name="Wray P.W."/>
            <person name="Young L."/>
            <person name="Ashurst J.L."/>
            <person name="Coulson A."/>
            <person name="Blocker H."/>
            <person name="Durbin R.M."/>
            <person name="Sulston J.E."/>
            <person name="Hubbard T."/>
            <person name="Jackson M.J."/>
            <person name="Bentley D.R."/>
            <person name="Beck S."/>
            <person name="Rogers J."/>
            <person name="Dunham I."/>
        </authorList>
    </citation>
    <scope>NUCLEOTIDE SEQUENCE [LARGE SCALE GENOMIC DNA]</scope>
</reference>
<reference key="5">
    <citation type="journal article" date="2004" name="Genome Res.">
        <title>The status, quality, and expansion of the NIH full-length cDNA project: the Mammalian Gene Collection (MGC).</title>
        <authorList>
            <consortium name="The MGC Project Team"/>
        </authorList>
    </citation>
    <scope>NUCLEOTIDE SEQUENCE [LARGE SCALE MRNA]</scope>
    <source>
        <tissue>Brain</tissue>
    </source>
</reference>
<reference key="6">
    <citation type="journal article" date="2014" name="Blood">
        <title>A new form of macrothrombocytopenia induced by a germ-line mutation in the PRKACG gene.</title>
        <authorList>
            <person name="Manchev V.T."/>
            <person name="Hilpert M."/>
            <person name="Berrou E."/>
            <person name="Elaib Z."/>
            <person name="Aouba A."/>
            <person name="Boukour S."/>
            <person name="Souquere S."/>
            <person name="Pierron G."/>
            <person name="Rameau P."/>
            <person name="Andrews R."/>
            <person name="Lanza F."/>
            <person name="Bobe R."/>
            <person name="Vainchenker W."/>
            <person name="Rosa J.P."/>
            <person name="Bryckaert M."/>
            <person name="Debili N."/>
            <person name="Favier R."/>
            <person name="Raslova H."/>
        </authorList>
    </citation>
    <scope>INVOLVEMENT IN BDPLT19</scope>
    <scope>VARIANT BDPLT19 MET-74</scope>
    <scope>CHARACTERIZATION OF VARIANT BDPLT19 MET-74</scope>
</reference>
<reference key="7">
    <citation type="journal article" date="2007" name="Nature">
        <title>Patterns of somatic mutation in human cancer genomes.</title>
        <authorList>
            <person name="Greenman C."/>
            <person name="Stephens P."/>
            <person name="Smith R."/>
            <person name="Dalgliesh G.L."/>
            <person name="Hunter C."/>
            <person name="Bignell G."/>
            <person name="Davies H."/>
            <person name="Teague J."/>
            <person name="Butler A."/>
            <person name="Stevens C."/>
            <person name="Edkins S."/>
            <person name="O'Meara S."/>
            <person name="Vastrik I."/>
            <person name="Schmidt E.E."/>
            <person name="Avis T."/>
            <person name="Barthorpe S."/>
            <person name="Bhamra G."/>
            <person name="Buck G."/>
            <person name="Choudhury B."/>
            <person name="Clements J."/>
            <person name="Cole J."/>
            <person name="Dicks E."/>
            <person name="Forbes S."/>
            <person name="Gray K."/>
            <person name="Halliday K."/>
            <person name="Harrison R."/>
            <person name="Hills K."/>
            <person name="Hinton J."/>
            <person name="Jenkinson A."/>
            <person name="Jones D."/>
            <person name="Menzies A."/>
            <person name="Mironenko T."/>
            <person name="Perry J."/>
            <person name="Raine K."/>
            <person name="Richardson D."/>
            <person name="Shepherd R."/>
            <person name="Small A."/>
            <person name="Tofts C."/>
            <person name="Varian J."/>
            <person name="Webb T."/>
            <person name="West S."/>
            <person name="Widaa S."/>
            <person name="Yates A."/>
            <person name="Cahill D.P."/>
            <person name="Louis D.N."/>
            <person name="Goldstraw P."/>
            <person name="Nicholson A.G."/>
            <person name="Brasseur F."/>
            <person name="Looijenga L."/>
            <person name="Weber B.L."/>
            <person name="Chiew Y.-E."/>
            <person name="DeFazio A."/>
            <person name="Greaves M.F."/>
            <person name="Green A.R."/>
            <person name="Campbell P."/>
            <person name="Birney E."/>
            <person name="Easton D.F."/>
            <person name="Chenevix-Trench G."/>
            <person name="Tan M.-H."/>
            <person name="Khoo S.K."/>
            <person name="Teh B.T."/>
            <person name="Yuen S.T."/>
            <person name="Leung S.Y."/>
            <person name="Wooster R."/>
            <person name="Futreal P.A."/>
            <person name="Stratton M.R."/>
        </authorList>
    </citation>
    <scope>VARIANTS [LARGE SCALE ANALYSIS] ASN-251 AND ASP-268</scope>
</reference>
<evidence type="ECO:0000250" key="1"/>
<evidence type="ECO:0000255" key="2">
    <source>
        <dbReference type="PROSITE-ProRule" id="PRU00159"/>
    </source>
</evidence>
<evidence type="ECO:0000255" key="3">
    <source>
        <dbReference type="PROSITE-ProRule" id="PRU00618"/>
    </source>
</evidence>
<evidence type="ECO:0000255" key="4">
    <source>
        <dbReference type="PROSITE-ProRule" id="PRU10027"/>
    </source>
</evidence>
<evidence type="ECO:0000269" key="5">
    <source>
    </source>
</evidence>
<evidence type="ECO:0000269" key="6">
    <source>
    </source>
</evidence>
<evidence type="ECO:0000269" key="7">
    <source>
    </source>
</evidence>
<evidence type="ECO:0000269" key="8">
    <source ref="3"/>
</evidence>
<evidence type="ECO:0000305" key="9"/>
<feature type="initiator methionine" description="Removed">
    <location>
        <position position="1"/>
    </location>
</feature>
<feature type="chain" id="PRO_0000086064" description="cAMP-dependent protein kinase catalytic subunit gamma">
    <location>
        <begin position="2"/>
        <end position="351"/>
    </location>
</feature>
<feature type="domain" description="Protein kinase" evidence="2">
    <location>
        <begin position="44"/>
        <end position="298"/>
    </location>
</feature>
<feature type="domain" description="AGC-kinase C-terminal" evidence="3">
    <location>
        <begin position="299"/>
        <end position="351"/>
    </location>
</feature>
<feature type="active site" description="Proton acceptor" evidence="2 4">
    <location>
        <position position="167"/>
    </location>
</feature>
<feature type="binding site" evidence="2">
    <location>
        <begin position="50"/>
        <end position="58"/>
    </location>
    <ligand>
        <name>ATP</name>
        <dbReference type="ChEBI" id="CHEBI:30616"/>
    </ligand>
</feature>
<feature type="binding site" evidence="2">
    <location>
        <position position="73"/>
    </location>
    <ligand>
        <name>ATP</name>
        <dbReference type="ChEBI" id="CHEBI:30616"/>
    </ligand>
</feature>
<feature type="modified residue" description="Phosphothreonine; by autocatalysis" evidence="1">
    <location>
        <position position="198"/>
    </location>
</feature>
<feature type="modified residue" description="Phosphoserine; by autocatalysis" evidence="1">
    <location>
        <position position="339"/>
    </location>
</feature>
<feature type="lipid moiety-binding region" description="N-myristoyl glycine" evidence="1">
    <location>
        <position position="2"/>
    </location>
</feature>
<feature type="sequence variant" id="VAR_072672" description="In BDPLT19; patient platelets show impaired activation; dbSNP:rs724159972." evidence="7">
    <original>I</original>
    <variation>M</variation>
    <location>
        <position position="74"/>
    </location>
</feature>
<feature type="sequence variant" id="VAR_040595" description="In dbSNP:rs56287972." evidence="5">
    <original>I</original>
    <variation>N</variation>
    <location>
        <position position="251"/>
    </location>
</feature>
<feature type="sequence variant" id="VAR_033902" description="In dbSNP:rs3730386." evidence="5 6 8">
    <original>H</original>
    <variation>D</variation>
    <location>
        <position position="268"/>
    </location>
</feature>
<feature type="sequence conflict" description="In Ref. 5; AAH39888." evidence="9" ref="5">
    <original>A</original>
    <variation>P</variation>
    <location>
        <position position="345"/>
    </location>
</feature>
<accession>P22612</accession>
<accession>O60850</accession>
<accession>Q5VZ02</accession>
<accession>Q86YI1</accession>
<organism>
    <name type="scientific">Homo sapiens</name>
    <name type="common">Human</name>
    <dbReference type="NCBI Taxonomy" id="9606"/>
    <lineage>
        <taxon>Eukaryota</taxon>
        <taxon>Metazoa</taxon>
        <taxon>Chordata</taxon>
        <taxon>Craniata</taxon>
        <taxon>Vertebrata</taxon>
        <taxon>Euteleostomi</taxon>
        <taxon>Mammalia</taxon>
        <taxon>Eutheria</taxon>
        <taxon>Euarchontoglires</taxon>
        <taxon>Primates</taxon>
        <taxon>Haplorrhini</taxon>
        <taxon>Catarrhini</taxon>
        <taxon>Hominidae</taxon>
        <taxon>Homo</taxon>
    </lineage>
</organism>
<sequence length="351" mass="40434">MGNAPAKKDTEQEESVNEFLAKARGDFLYRWGNPAQNTASSDQFERLRTLGMGSFGRVMLVRHQETGGHYAMKILNKQKVVKMKQVEHILNEKRILQAIDFPFLVKLQFSFKDNSYLYLVMEYVPGGEMFSRLQRVGRFSEPHACFYAAQVVLAVQYLHSLDLIHRDLKPENLLIDQQGYLQVTDFGFAKRVKGRTWTLCGTPEYLAPEIILSKGYNKAVDWWALGVLIYEMAVGFPPFYADQPIQIYEKIVSGRVRFPSKLSSDLKHLLRSLLQVDLTKRFGNLRNGVGDIKNHKWFATTSWIAIYEKKVEAPFIPKYTGPGDASNFDDYEEEELRISINEKCAKEFSEF</sequence>
<comment type="function">
    <text>Phosphorylates a large number of substrates in the cytoplasm and the nucleus.</text>
</comment>
<comment type="catalytic activity">
    <reaction>
        <text>L-seryl-[protein] + ATP = O-phospho-L-seryl-[protein] + ADP + H(+)</text>
        <dbReference type="Rhea" id="RHEA:17989"/>
        <dbReference type="Rhea" id="RHEA-COMP:9863"/>
        <dbReference type="Rhea" id="RHEA-COMP:11604"/>
        <dbReference type="ChEBI" id="CHEBI:15378"/>
        <dbReference type="ChEBI" id="CHEBI:29999"/>
        <dbReference type="ChEBI" id="CHEBI:30616"/>
        <dbReference type="ChEBI" id="CHEBI:83421"/>
        <dbReference type="ChEBI" id="CHEBI:456216"/>
        <dbReference type="EC" id="2.7.11.11"/>
    </reaction>
</comment>
<comment type="catalytic activity">
    <reaction>
        <text>L-threonyl-[protein] + ATP = O-phospho-L-threonyl-[protein] + ADP + H(+)</text>
        <dbReference type="Rhea" id="RHEA:46608"/>
        <dbReference type="Rhea" id="RHEA-COMP:11060"/>
        <dbReference type="Rhea" id="RHEA-COMP:11605"/>
        <dbReference type="ChEBI" id="CHEBI:15378"/>
        <dbReference type="ChEBI" id="CHEBI:30013"/>
        <dbReference type="ChEBI" id="CHEBI:30616"/>
        <dbReference type="ChEBI" id="CHEBI:61977"/>
        <dbReference type="ChEBI" id="CHEBI:456216"/>
        <dbReference type="EC" id="2.7.11.11"/>
    </reaction>
</comment>
<comment type="activity regulation">
    <text>Activated by cAMP.</text>
</comment>
<comment type="subunit">
    <text>A number of inactive tetrameric holoenzymes are produced by the combination of homo- or heterodimers of the different regulatory subunits associated with two catalytic subunits. cAMP causes the dissociation of the inactive holoenzyme into a dimer of regulatory subunits bound to four cAMP and two free monomeric catalytic subunits.</text>
</comment>
<comment type="interaction">
    <interactant intactId="EBI-3907086">
        <id>P22612</id>
    </interactant>
    <interactant intactId="EBI-77613">
        <id>P05067</id>
        <label>APP</label>
    </interactant>
    <organismsDiffer>false</organismsDiffer>
    <experiments>3</experiments>
</comment>
<comment type="tissue specificity">
    <text>Testis specific. But important tissues such as brain and ovary have not been analyzed for the content of transcript.</text>
</comment>
<comment type="disease" evidence="7">
    <disease id="DI-04294">
        <name>Bleeding disorder, platelet-type, 19</name>
        <acronym>BDPLT19</acronym>
        <description>A disorder characterized by increased bleeding tendency due to platelet dysfunction. Clinical features include epistaxis, hematomas, bleeding after tooth extraction, and menorrhagia.</description>
        <dbReference type="MIM" id="616176"/>
    </disease>
    <text>The disease is caused by variants affecting the gene represented in this entry.</text>
</comment>
<comment type="similarity">
    <text evidence="9">Belongs to the protein kinase superfamily. AGC Ser/Thr protein kinase family. cAMP subfamily.</text>
</comment>
<comment type="sequence caution" evidence="9">
    <conflict type="erroneous initiation">
        <sequence resource="EMBL-CDS" id="AAC41690"/>
    </conflict>
    <text>Extended N-terminus.</text>
</comment>
<proteinExistence type="evidence at protein level"/>
<dbReference type="EC" id="2.7.11.11"/>
<dbReference type="EMBL" id="M34182">
    <property type="protein sequence ID" value="AAC41690.1"/>
    <property type="status" value="ALT_INIT"/>
    <property type="molecule type" value="mRNA"/>
</dbReference>
<dbReference type="EMBL" id="AJ001597">
    <property type="protein sequence ID" value="CAA04863.1"/>
    <property type="molecule type" value="Genomic_DNA"/>
</dbReference>
<dbReference type="EMBL" id="DQ667175">
    <property type="protein sequence ID" value="ABG25920.1"/>
    <property type="molecule type" value="Genomic_DNA"/>
</dbReference>
<dbReference type="EMBL" id="AL162730">
    <property type="status" value="NOT_ANNOTATED_CDS"/>
    <property type="molecule type" value="Genomic_DNA"/>
</dbReference>
<dbReference type="EMBL" id="BC039888">
    <property type="protein sequence ID" value="AAH39888.1"/>
    <property type="molecule type" value="mRNA"/>
</dbReference>
<dbReference type="CCDS" id="CCDS6625.1"/>
<dbReference type="PIR" id="B34724">
    <property type="entry name" value="OKHUCG"/>
</dbReference>
<dbReference type="RefSeq" id="NP_002723.2">
    <property type="nucleotide sequence ID" value="NM_002732.3"/>
</dbReference>
<dbReference type="SMR" id="P22612"/>
<dbReference type="BioGRID" id="111555">
    <property type="interactions" value="127"/>
</dbReference>
<dbReference type="FunCoup" id="P22612">
    <property type="interactions" value="2655"/>
</dbReference>
<dbReference type="IntAct" id="P22612">
    <property type="interactions" value="97"/>
</dbReference>
<dbReference type="STRING" id="9606.ENSP00000366488"/>
<dbReference type="BindingDB" id="P22612"/>
<dbReference type="ChEMBL" id="CHEMBL2743"/>
<dbReference type="DrugCentral" id="P22612"/>
<dbReference type="GuidetoPHARMACOLOGY" id="1478"/>
<dbReference type="iPTMnet" id="P22612"/>
<dbReference type="PhosphoSitePlus" id="P22612"/>
<dbReference type="BioMuta" id="PRKACG"/>
<dbReference type="DMDM" id="33860173"/>
<dbReference type="jPOST" id="P22612"/>
<dbReference type="MassIVE" id="P22612"/>
<dbReference type="PaxDb" id="9606-ENSP00000366488"/>
<dbReference type="PeptideAtlas" id="P22612"/>
<dbReference type="ProteomicsDB" id="54009"/>
<dbReference type="Pumba" id="P22612"/>
<dbReference type="Antibodypedia" id="3868">
    <property type="antibodies" value="235 antibodies from 31 providers"/>
</dbReference>
<dbReference type="DNASU" id="5568"/>
<dbReference type="Ensembl" id="ENST00000377276.5">
    <property type="protein sequence ID" value="ENSP00000366488.2"/>
    <property type="gene ID" value="ENSG00000165059.8"/>
</dbReference>
<dbReference type="GeneID" id="5568"/>
<dbReference type="KEGG" id="hsa:5568"/>
<dbReference type="MANE-Select" id="ENST00000377276.5">
    <property type="protein sequence ID" value="ENSP00000366488.2"/>
    <property type="RefSeq nucleotide sequence ID" value="NM_002732.4"/>
    <property type="RefSeq protein sequence ID" value="NP_002723.2"/>
</dbReference>
<dbReference type="UCSC" id="uc004agy.4">
    <property type="organism name" value="human"/>
</dbReference>
<dbReference type="AGR" id="HGNC:9382"/>
<dbReference type="CTD" id="5568"/>
<dbReference type="DisGeNET" id="5568"/>
<dbReference type="GeneCards" id="PRKACG"/>
<dbReference type="HGNC" id="HGNC:9382">
    <property type="gene designation" value="PRKACG"/>
</dbReference>
<dbReference type="HPA" id="ENSG00000165059">
    <property type="expression patterns" value="Tissue enriched (testis)"/>
</dbReference>
<dbReference type="MalaCards" id="PRKACG"/>
<dbReference type="MIM" id="176893">
    <property type="type" value="gene"/>
</dbReference>
<dbReference type="MIM" id="616176">
    <property type="type" value="phenotype"/>
</dbReference>
<dbReference type="neXtProt" id="NX_P22612"/>
<dbReference type="OpenTargets" id="ENSG00000165059"/>
<dbReference type="Orphanet" id="438207">
    <property type="disease" value="Severe autosomal recessive macrothrombocytopenia"/>
</dbReference>
<dbReference type="PharmGKB" id="PA33750"/>
<dbReference type="VEuPathDB" id="HostDB:ENSG00000165059"/>
<dbReference type="eggNOG" id="KOG0616">
    <property type="taxonomic scope" value="Eukaryota"/>
</dbReference>
<dbReference type="GeneTree" id="ENSGT00940000165129"/>
<dbReference type="HOGENOM" id="CLU_000288_63_5_1"/>
<dbReference type="InParanoid" id="P22612"/>
<dbReference type="OMA" id="TSWIAIY"/>
<dbReference type="OrthoDB" id="63267at2759"/>
<dbReference type="PAN-GO" id="P22612">
    <property type="GO annotations" value="3 GO annotations based on evolutionary models"/>
</dbReference>
<dbReference type="PhylomeDB" id="P22612"/>
<dbReference type="TreeFam" id="TF313399"/>
<dbReference type="BRENDA" id="2.7.11.11">
    <property type="organism ID" value="2681"/>
</dbReference>
<dbReference type="PathwayCommons" id="P22612"/>
<dbReference type="Reactome" id="R-HSA-111931">
    <property type="pathway name" value="PKA-mediated phosphorylation of CREB"/>
</dbReference>
<dbReference type="Reactome" id="R-HSA-163358">
    <property type="pathway name" value="PKA-mediated phosphorylation of key metabolic factors"/>
</dbReference>
<dbReference type="Reactome" id="R-HSA-163560">
    <property type="pathway name" value="Triglyceride catabolism"/>
</dbReference>
<dbReference type="Reactome" id="R-HSA-163615">
    <property type="pathway name" value="PKA activation"/>
</dbReference>
<dbReference type="Reactome" id="R-HSA-164378">
    <property type="pathway name" value="PKA activation in glucagon signalling"/>
</dbReference>
<dbReference type="Reactome" id="R-HSA-180024">
    <property type="pathway name" value="DARPP-32 events"/>
</dbReference>
<dbReference type="Reactome" id="R-HSA-381676">
    <property type="pathway name" value="Glucagon-like Peptide-1 (GLP1) regulates insulin secretion"/>
</dbReference>
<dbReference type="Reactome" id="R-HSA-392517">
    <property type="pathway name" value="Rap1 signalling"/>
</dbReference>
<dbReference type="Reactome" id="R-HSA-422356">
    <property type="pathway name" value="Regulation of insulin secretion"/>
</dbReference>
<dbReference type="Reactome" id="R-HSA-432040">
    <property type="pathway name" value="Vasopressin regulates renal water homeostasis via Aquaporins"/>
</dbReference>
<dbReference type="Reactome" id="R-HSA-4420097">
    <property type="pathway name" value="VEGFA-VEGFR2 Pathway"/>
</dbReference>
<dbReference type="Reactome" id="R-HSA-442720">
    <property type="pathway name" value="CREB1 phosphorylation through the activation of Adenylate Cyclase"/>
</dbReference>
<dbReference type="Reactome" id="R-HSA-5610780">
    <property type="pathway name" value="Degradation of GLI1 by the proteasome"/>
</dbReference>
<dbReference type="Reactome" id="R-HSA-5610783">
    <property type="pathway name" value="Degradation of GLI2 by the proteasome"/>
</dbReference>
<dbReference type="Reactome" id="R-HSA-5610785">
    <property type="pathway name" value="GLI3 is processed to GLI3R by the proteasome"/>
</dbReference>
<dbReference type="Reactome" id="R-HSA-5610787">
    <property type="pathway name" value="Hedgehog 'off' state"/>
</dbReference>
<dbReference type="Reactome" id="R-HSA-5621575">
    <property type="pathway name" value="CD209 (DC-SIGN) signaling"/>
</dbReference>
<dbReference type="Reactome" id="R-HSA-5687128">
    <property type="pathway name" value="MAPK6/MAPK4 signaling"/>
</dbReference>
<dbReference type="Reactome" id="R-HSA-8853659">
    <property type="pathway name" value="RET signaling"/>
</dbReference>
<dbReference type="Reactome" id="R-HSA-8963896">
    <property type="pathway name" value="HDL assembly"/>
</dbReference>
<dbReference type="Reactome" id="R-HSA-9010642">
    <property type="pathway name" value="ROBO receptors bind AKAP5"/>
</dbReference>
<dbReference type="Reactome" id="R-HSA-9634597">
    <property type="pathway name" value="GPER1 signaling"/>
</dbReference>
<dbReference type="Reactome" id="R-HSA-9634600">
    <property type="pathway name" value="Regulation of glycolysis by fructose 2,6-bisphosphate metabolism"/>
</dbReference>
<dbReference type="Reactome" id="R-HSA-9660821">
    <property type="pathway name" value="ADORA2B mediated anti-inflammatory cytokines production"/>
</dbReference>
<dbReference type="Reactome" id="R-HSA-9664323">
    <property type="pathway name" value="FCGR3A-mediated IL10 synthesis"/>
</dbReference>
<dbReference type="Reactome" id="R-HSA-983231">
    <property type="pathway name" value="Factors involved in megakaryocyte development and platelet production"/>
</dbReference>
<dbReference type="Reactome" id="R-HSA-9856530">
    <property type="pathway name" value="High laminar flow shear stress activates signaling by PIEZO1 and PECAM1:CDH5:KDR in endothelial cells"/>
</dbReference>
<dbReference type="SABIO-RK" id="P22612"/>
<dbReference type="SignaLink" id="P22612"/>
<dbReference type="SIGNOR" id="P22612"/>
<dbReference type="BioGRID-ORCS" id="5568">
    <property type="hits" value="23 hits in 1183 CRISPR screens"/>
</dbReference>
<dbReference type="GeneWiki" id="PRKACG"/>
<dbReference type="GenomeRNAi" id="5568"/>
<dbReference type="Pharos" id="P22612">
    <property type="development level" value="Tchem"/>
</dbReference>
<dbReference type="PRO" id="PR:P22612"/>
<dbReference type="Proteomes" id="UP000005640">
    <property type="component" value="Chromosome 9"/>
</dbReference>
<dbReference type="RNAct" id="P22612">
    <property type="molecule type" value="protein"/>
</dbReference>
<dbReference type="Bgee" id="ENSG00000165059">
    <property type="expression patterns" value="Expressed in sperm and 17 other cell types or tissues"/>
</dbReference>
<dbReference type="GO" id="GO:0005952">
    <property type="term" value="C:cAMP-dependent protein kinase complex"/>
    <property type="evidence" value="ECO:0000318"/>
    <property type="project" value="GO_Central"/>
</dbReference>
<dbReference type="GO" id="GO:0097546">
    <property type="term" value="C:ciliary base"/>
    <property type="evidence" value="ECO:0000304"/>
    <property type="project" value="Reactome"/>
</dbReference>
<dbReference type="GO" id="GO:0005829">
    <property type="term" value="C:cytosol"/>
    <property type="evidence" value="ECO:0000318"/>
    <property type="project" value="GO_Central"/>
</dbReference>
<dbReference type="GO" id="GO:0005654">
    <property type="term" value="C:nucleoplasm"/>
    <property type="evidence" value="ECO:0000304"/>
    <property type="project" value="Reactome"/>
</dbReference>
<dbReference type="GO" id="GO:0005634">
    <property type="term" value="C:nucleus"/>
    <property type="evidence" value="ECO:0000318"/>
    <property type="project" value="GO_Central"/>
</dbReference>
<dbReference type="GO" id="GO:0005524">
    <property type="term" value="F:ATP binding"/>
    <property type="evidence" value="ECO:0007669"/>
    <property type="project" value="UniProtKB-KW"/>
</dbReference>
<dbReference type="GO" id="GO:0004691">
    <property type="term" value="F:cAMP-dependent protein kinase activity"/>
    <property type="evidence" value="ECO:0000318"/>
    <property type="project" value="GO_Central"/>
</dbReference>
<dbReference type="GO" id="GO:0034237">
    <property type="term" value="F:protein kinase A regulatory subunit binding"/>
    <property type="evidence" value="ECO:0000318"/>
    <property type="project" value="GO_Central"/>
</dbReference>
<dbReference type="GO" id="GO:0106310">
    <property type="term" value="F:protein serine kinase activity"/>
    <property type="evidence" value="ECO:0007669"/>
    <property type="project" value="RHEA"/>
</dbReference>
<dbReference type="GO" id="GO:0004674">
    <property type="term" value="F:protein serine/threonine kinase activity"/>
    <property type="evidence" value="ECO:0000304"/>
    <property type="project" value="Reactome"/>
</dbReference>
<dbReference type="GO" id="GO:0034380">
    <property type="term" value="P:high-density lipoprotein particle assembly"/>
    <property type="evidence" value="ECO:0000304"/>
    <property type="project" value="Reactome"/>
</dbReference>
<dbReference type="GO" id="GO:0008584">
    <property type="term" value="P:male gonad development"/>
    <property type="evidence" value="ECO:0000304"/>
    <property type="project" value="ProtInc"/>
</dbReference>
<dbReference type="GO" id="GO:0003091">
    <property type="term" value="P:renal water homeostasis"/>
    <property type="evidence" value="ECO:0000304"/>
    <property type="project" value="Reactome"/>
</dbReference>
<dbReference type="GO" id="GO:0007165">
    <property type="term" value="P:signal transduction"/>
    <property type="evidence" value="ECO:0000318"/>
    <property type="project" value="GO_Central"/>
</dbReference>
<dbReference type="GO" id="GO:0007283">
    <property type="term" value="P:spermatogenesis"/>
    <property type="evidence" value="ECO:0000304"/>
    <property type="project" value="ProtInc"/>
</dbReference>
<dbReference type="GO" id="GO:0097700">
    <property type="term" value="P:vascular endothelial cell response to laminar fluid shear stress"/>
    <property type="evidence" value="ECO:0000304"/>
    <property type="project" value="Reactome"/>
</dbReference>
<dbReference type="CDD" id="cd14209">
    <property type="entry name" value="STKc_PKA"/>
    <property type="match status" value="1"/>
</dbReference>
<dbReference type="FunFam" id="3.30.200.20:FF:000005">
    <property type="entry name" value="cAMP-dependent protein kinase catalytic subunit"/>
    <property type="match status" value="1"/>
</dbReference>
<dbReference type="FunFam" id="1.10.510.10:FF:000005">
    <property type="entry name" value="cAMP-dependent protein kinase catalytic subunit alpha"/>
    <property type="match status" value="1"/>
</dbReference>
<dbReference type="Gene3D" id="3.30.200.20">
    <property type="entry name" value="Phosphorylase Kinase, domain 1"/>
    <property type="match status" value="1"/>
</dbReference>
<dbReference type="Gene3D" id="1.10.510.10">
    <property type="entry name" value="Transferase(Phosphotransferase) domain 1"/>
    <property type="match status" value="1"/>
</dbReference>
<dbReference type="InterPro" id="IPR000961">
    <property type="entry name" value="AGC-kinase_C"/>
</dbReference>
<dbReference type="InterPro" id="IPR011009">
    <property type="entry name" value="Kinase-like_dom_sf"/>
</dbReference>
<dbReference type="InterPro" id="IPR000719">
    <property type="entry name" value="Prot_kinase_dom"/>
</dbReference>
<dbReference type="InterPro" id="IPR017441">
    <property type="entry name" value="Protein_kinase_ATP_BS"/>
</dbReference>
<dbReference type="InterPro" id="IPR008271">
    <property type="entry name" value="Ser/Thr_kinase_AS"/>
</dbReference>
<dbReference type="InterPro" id="IPR044109">
    <property type="entry name" value="STKc_PKA"/>
</dbReference>
<dbReference type="PANTHER" id="PTHR24353:SF137">
    <property type="entry name" value="CAMP-DEPENDENT PROTEIN KINASE CATALYTIC SUBUNIT GAMMA"/>
    <property type="match status" value="1"/>
</dbReference>
<dbReference type="PANTHER" id="PTHR24353">
    <property type="entry name" value="CYCLIC NUCLEOTIDE-DEPENDENT PROTEIN KINASE"/>
    <property type="match status" value="1"/>
</dbReference>
<dbReference type="Pfam" id="PF00069">
    <property type="entry name" value="Pkinase"/>
    <property type="match status" value="1"/>
</dbReference>
<dbReference type="SMART" id="SM00133">
    <property type="entry name" value="S_TK_X"/>
    <property type="match status" value="1"/>
</dbReference>
<dbReference type="SMART" id="SM00220">
    <property type="entry name" value="S_TKc"/>
    <property type="match status" value="1"/>
</dbReference>
<dbReference type="SUPFAM" id="SSF56112">
    <property type="entry name" value="Protein kinase-like (PK-like)"/>
    <property type="match status" value="1"/>
</dbReference>
<dbReference type="PROSITE" id="PS51285">
    <property type="entry name" value="AGC_KINASE_CTER"/>
    <property type="match status" value="1"/>
</dbReference>
<dbReference type="PROSITE" id="PS00107">
    <property type="entry name" value="PROTEIN_KINASE_ATP"/>
    <property type="match status" value="1"/>
</dbReference>
<dbReference type="PROSITE" id="PS50011">
    <property type="entry name" value="PROTEIN_KINASE_DOM"/>
    <property type="match status" value="1"/>
</dbReference>
<dbReference type="PROSITE" id="PS00108">
    <property type="entry name" value="PROTEIN_KINASE_ST"/>
    <property type="match status" value="1"/>
</dbReference>